<sequence length="63" mass="7359">MKAQEIREKSVEALQQQLLELLREQFNLRMQKATGQLSQTHLLKQVRRDIARVKTVLNEKAGD</sequence>
<organism>
    <name type="scientific">Chromohalobacter salexigens (strain ATCC BAA-138 / DSM 3043 / CIP 106854 / NCIMB 13768 / 1H11)</name>
    <dbReference type="NCBI Taxonomy" id="290398"/>
    <lineage>
        <taxon>Bacteria</taxon>
        <taxon>Pseudomonadati</taxon>
        <taxon>Pseudomonadota</taxon>
        <taxon>Gammaproteobacteria</taxon>
        <taxon>Oceanospirillales</taxon>
        <taxon>Halomonadaceae</taxon>
        <taxon>Chromohalobacter</taxon>
    </lineage>
</organism>
<accession>Q1R0G7</accession>
<evidence type="ECO:0000255" key="1">
    <source>
        <dbReference type="HAMAP-Rule" id="MF_00374"/>
    </source>
</evidence>
<evidence type="ECO:0000305" key="2"/>
<proteinExistence type="inferred from homology"/>
<dbReference type="EMBL" id="CP000285">
    <property type="protein sequence ID" value="ABE57791.1"/>
    <property type="molecule type" value="Genomic_DNA"/>
</dbReference>
<dbReference type="RefSeq" id="WP_011505737.1">
    <property type="nucleotide sequence ID" value="NC_007963.1"/>
</dbReference>
<dbReference type="SMR" id="Q1R0G7"/>
<dbReference type="STRING" id="290398.Csal_0429"/>
<dbReference type="GeneID" id="95333182"/>
<dbReference type="KEGG" id="csa:Csal_0429"/>
<dbReference type="eggNOG" id="COG0255">
    <property type="taxonomic scope" value="Bacteria"/>
</dbReference>
<dbReference type="HOGENOM" id="CLU_158491_1_2_6"/>
<dbReference type="OrthoDB" id="9815192at2"/>
<dbReference type="Proteomes" id="UP000000239">
    <property type="component" value="Chromosome"/>
</dbReference>
<dbReference type="GO" id="GO:0022625">
    <property type="term" value="C:cytosolic large ribosomal subunit"/>
    <property type="evidence" value="ECO:0007669"/>
    <property type="project" value="TreeGrafter"/>
</dbReference>
<dbReference type="GO" id="GO:0003735">
    <property type="term" value="F:structural constituent of ribosome"/>
    <property type="evidence" value="ECO:0007669"/>
    <property type="project" value="InterPro"/>
</dbReference>
<dbReference type="GO" id="GO:0006412">
    <property type="term" value="P:translation"/>
    <property type="evidence" value="ECO:0007669"/>
    <property type="project" value="UniProtKB-UniRule"/>
</dbReference>
<dbReference type="CDD" id="cd00427">
    <property type="entry name" value="Ribosomal_L29_HIP"/>
    <property type="match status" value="1"/>
</dbReference>
<dbReference type="FunFam" id="1.10.287.310:FF:000001">
    <property type="entry name" value="50S ribosomal protein L29"/>
    <property type="match status" value="1"/>
</dbReference>
<dbReference type="Gene3D" id="1.10.287.310">
    <property type="match status" value="1"/>
</dbReference>
<dbReference type="HAMAP" id="MF_00374">
    <property type="entry name" value="Ribosomal_uL29"/>
    <property type="match status" value="1"/>
</dbReference>
<dbReference type="InterPro" id="IPR050063">
    <property type="entry name" value="Ribosomal_protein_uL29"/>
</dbReference>
<dbReference type="InterPro" id="IPR001854">
    <property type="entry name" value="Ribosomal_uL29"/>
</dbReference>
<dbReference type="InterPro" id="IPR018254">
    <property type="entry name" value="Ribosomal_uL29_CS"/>
</dbReference>
<dbReference type="InterPro" id="IPR036049">
    <property type="entry name" value="Ribosomal_uL29_sf"/>
</dbReference>
<dbReference type="NCBIfam" id="TIGR00012">
    <property type="entry name" value="L29"/>
    <property type="match status" value="1"/>
</dbReference>
<dbReference type="PANTHER" id="PTHR10916">
    <property type="entry name" value="60S RIBOSOMAL PROTEIN L35/50S RIBOSOMAL PROTEIN L29"/>
    <property type="match status" value="1"/>
</dbReference>
<dbReference type="PANTHER" id="PTHR10916:SF0">
    <property type="entry name" value="LARGE RIBOSOMAL SUBUNIT PROTEIN UL29C"/>
    <property type="match status" value="1"/>
</dbReference>
<dbReference type="Pfam" id="PF00831">
    <property type="entry name" value="Ribosomal_L29"/>
    <property type="match status" value="1"/>
</dbReference>
<dbReference type="SUPFAM" id="SSF46561">
    <property type="entry name" value="Ribosomal protein L29 (L29p)"/>
    <property type="match status" value="1"/>
</dbReference>
<dbReference type="PROSITE" id="PS00579">
    <property type="entry name" value="RIBOSOMAL_L29"/>
    <property type="match status" value="1"/>
</dbReference>
<reference key="1">
    <citation type="journal article" date="2011" name="Stand. Genomic Sci.">
        <title>Complete genome sequence of the halophilic and highly halotolerant Chromohalobacter salexigens type strain (1H11(T)).</title>
        <authorList>
            <person name="Copeland A."/>
            <person name="O'Connor K."/>
            <person name="Lucas S."/>
            <person name="Lapidus A."/>
            <person name="Berry K.W."/>
            <person name="Detter J.C."/>
            <person name="Del Rio T.G."/>
            <person name="Hammon N."/>
            <person name="Dalin E."/>
            <person name="Tice H."/>
            <person name="Pitluck S."/>
            <person name="Bruce D."/>
            <person name="Goodwin L."/>
            <person name="Han C."/>
            <person name="Tapia R."/>
            <person name="Saunders E."/>
            <person name="Schmutz J."/>
            <person name="Brettin T."/>
            <person name="Larimer F."/>
            <person name="Land M."/>
            <person name="Hauser L."/>
            <person name="Vargas C."/>
            <person name="Nieto J.J."/>
            <person name="Kyrpides N.C."/>
            <person name="Ivanova N."/>
            <person name="Goker M."/>
            <person name="Klenk H.P."/>
            <person name="Csonka L.N."/>
            <person name="Woyke T."/>
        </authorList>
    </citation>
    <scope>NUCLEOTIDE SEQUENCE [LARGE SCALE GENOMIC DNA]</scope>
    <source>
        <strain>ATCC BAA-138 / DSM 3043 / CIP 106854 / NCIMB 13768 / 1H11</strain>
    </source>
</reference>
<comment type="similarity">
    <text evidence="1">Belongs to the universal ribosomal protein uL29 family.</text>
</comment>
<feature type="chain" id="PRO_1000007454" description="Large ribosomal subunit protein uL29">
    <location>
        <begin position="1"/>
        <end position="63"/>
    </location>
</feature>
<protein>
    <recommendedName>
        <fullName evidence="1">Large ribosomal subunit protein uL29</fullName>
    </recommendedName>
    <alternativeName>
        <fullName evidence="2">50S ribosomal protein L29</fullName>
    </alternativeName>
</protein>
<gene>
    <name evidence="1" type="primary">rpmC</name>
    <name type="ordered locus">Csal_0429</name>
</gene>
<keyword id="KW-1185">Reference proteome</keyword>
<keyword id="KW-0687">Ribonucleoprotein</keyword>
<keyword id="KW-0689">Ribosomal protein</keyword>
<name>RL29_CHRSD</name>